<keyword id="KW-0378">Hydrolase</keyword>
<keyword id="KW-1185">Reference proteome</keyword>
<reference key="1">
    <citation type="journal article" date="2007" name="Nat. Biotechnol.">
        <title>Genome sequence and identification of candidate vaccine antigens from the animal pathogen Dichelobacter nodosus.</title>
        <authorList>
            <person name="Myers G.S.A."/>
            <person name="Parker D."/>
            <person name="Al-Hasani K."/>
            <person name="Kennan R.M."/>
            <person name="Seemann T."/>
            <person name="Ren Q."/>
            <person name="Badger J.H."/>
            <person name="Selengut J.D."/>
            <person name="Deboy R.T."/>
            <person name="Tettelin H."/>
            <person name="Boyce J.D."/>
            <person name="McCarl V.P."/>
            <person name="Han X."/>
            <person name="Nelson W.C."/>
            <person name="Madupu R."/>
            <person name="Mohamoud Y."/>
            <person name="Holley T."/>
            <person name="Fedorova N."/>
            <person name="Khouri H."/>
            <person name="Bottomley S.P."/>
            <person name="Whittington R.J."/>
            <person name="Adler B."/>
            <person name="Songer J.G."/>
            <person name="Rood J.I."/>
            <person name="Paulsen I.T."/>
        </authorList>
    </citation>
    <scope>NUCLEOTIDE SEQUENCE [LARGE SCALE GENOMIC DNA]</scope>
    <source>
        <strain>VCS1703A</strain>
    </source>
</reference>
<evidence type="ECO:0000255" key="1">
    <source>
        <dbReference type="HAMAP-Rule" id="MF_01527"/>
    </source>
</evidence>
<protein>
    <recommendedName>
        <fullName evidence="1">GTP cyclohydrolase FolE2</fullName>
        <ecNumber evidence="1">3.5.4.16</ecNumber>
    </recommendedName>
</protein>
<organism>
    <name type="scientific">Dichelobacter nodosus (strain VCS1703A)</name>
    <dbReference type="NCBI Taxonomy" id="246195"/>
    <lineage>
        <taxon>Bacteria</taxon>
        <taxon>Pseudomonadati</taxon>
        <taxon>Pseudomonadota</taxon>
        <taxon>Gammaproteobacteria</taxon>
        <taxon>Cardiobacteriales</taxon>
        <taxon>Cardiobacteriaceae</taxon>
        <taxon>Dichelobacter</taxon>
    </lineage>
</organism>
<proteinExistence type="inferred from homology"/>
<feature type="chain" id="PRO_0000297505" description="GTP cyclohydrolase FolE2">
    <location>
        <begin position="1"/>
        <end position="262"/>
    </location>
</feature>
<feature type="site" description="May be catalytically important" evidence="1">
    <location>
        <position position="149"/>
    </location>
</feature>
<name>GCH4_DICNV</name>
<gene>
    <name evidence="1" type="primary">folE2</name>
    <name type="ordered locus">DNO_1248</name>
</gene>
<sequence length="262" mass="29458">MTETAIPDVQSSPDKRHIAINRVGIRDLRLPLFIENAAGEAMPTVARAALMVALPHTQKGTHMSRFIRLLDLKTPISVSALPTLHQKMLDTLHAEEGTISLSFPFFIEKSAPVSGEKALLDYEVVLAVDGNRKHVEVSVEVTVPVTSLCPCSKEISQYGAHNQRSHIVIYAQYNPNQPFSIEDLIHIAEEGASCPIWSLLKRPDEKYITERAYEHPKFVEDIVRDIAMVLNDDPRISFYRISSENFESIHNHSAFALIEHQK</sequence>
<accession>A5EXB0</accession>
<comment type="function">
    <text evidence="1">Converts GTP to 7,8-dihydroneopterin triphosphate.</text>
</comment>
<comment type="catalytic activity">
    <reaction evidence="1">
        <text>GTP + H2O = 7,8-dihydroneopterin 3'-triphosphate + formate + H(+)</text>
        <dbReference type="Rhea" id="RHEA:17473"/>
        <dbReference type="ChEBI" id="CHEBI:15377"/>
        <dbReference type="ChEBI" id="CHEBI:15378"/>
        <dbReference type="ChEBI" id="CHEBI:15740"/>
        <dbReference type="ChEBI" id="CHEBI:37565"/>
        <dbReference type="ChEBI" id="CHEBI:58462"/>
        <dbReference type="EC" id="3.5.4.16"/>
    </reaction>
</comment>
<comment type="pathway">
    <text evidence="1">Cofactor biosynthesis; 7,8-dihydroneopterin triphosphate biosynthesis; 7,8-dihydroneopterin triphosphate from GTP: step 1/1.</text>
</comment>
<comment type="similarity">
    <text evidence="1">Belongs to the GTP cyclohydrolase IV family.</text>
</comment>
<dbReference type="EC" id="3.5.4.16" evidence="1"/>
<dbReference type="EMBL" id="CP000513">
    <property type="protein sequence ID" value="ABQ13387.1"/>
    <property type="molecule type" value="Genomic_DNA"/>
</dbReference>
<dbReference type="RefSeq" id="WP_012031543.1">
    <property type="nucleotide sequence ID" value="NC_009446.1"/>
</dbReference>
<dbReference type="SMR" id="A5EXB0"/>
<dbReference type="STRING" id="246195.DNO_1248"/>
<dbReference type="KEGG" id="dno:DNO_1248"/>
<dbReference type="eggNOG" id="COG1469">
    <property type="taxonomic scope" value="Bacteria"/>
</dbReference>
<dbReference type="HOGENOM" id="CLU_062816_1_1_6"/>
<dbReference type="OrthoDB" id="9774824at2"/>
<dbReference type="UniPathway" id="UPA00848">
    <property type="reaction ID" value="UER00151"/>
</dbReference>
<dbReference type="Proteomes" id="UP000000248">
    <property type="component" value="Chromosome"/>
</dbReference>
<dbReference type="GO" id="GO:0003934">
    <property type="term" value="F:GTP cyclohydrolase I activity"/>
    <property type="evidence" value="ECO:0007669"/>
    <property type="project" value="UniProtKB-UniRule"/>
</dbReference>
<dbReference type="GO" id="GO:0046654">
    <property type="term" value="P:tetrahydrofolate biosynthetic process"/>
    <property type="evidence" value="ECO:0007669"/>
    <property type="project" value="UniProtKB-UniRule"/>
</dbReference>
<dbReference type="Gene3D" id="3.10.270.10">
    <property type="entry name" value="Urate Oxidase"/>
    <property type="match status" value="1"/>
</dbReference>
<dbReference type="HAMAP" id="MF_01527_B">
    <property type="entry name" value="GTP_cyclohydrol_B"/>
    <property type="match status" value="1"/>
</dbReference>
<dbReference type="InterPro" id="IPR022838">
    <property type="entry name" value="GTP_cyclohydrolase_FolE2"/>
</dbReference>
<dbReference type="InterPro" id="IPR003801">
    <property type="entry name" value="GTP_cyclohydrolase_FolE2/MptA"/>
</dbReference>
<dbReference type="NCBIfam" id="NF010200">
    <property type="entry name" value="PRK13674.1-1"/>
    <property type="match status" value="1"/>
</dbReference>
<dbReference type="PANTHER" id="PTHR36445">
    <property type="entry name" value="GTP CYCLOHYDROLASE MPTA"/>
    <property type="match status" value="1"/>
</dbReference>
<dbReference type="PANTHER" id="PTHR36445:SF1">
    <property type="entry name" value="GTP CYCLOHYDROLASE MPTA"/>
    <property type="match status" value="1"/>
</dbReference>
<dbReference type="Pfam" id="PF02649">
    <property type="entry name" value="GCHY-1"/>
    <property type="match status" value="1"/>
</dbReference>